<keyword id="KW-0007">Acetylation</keyword>
<keyword id="KW-0903">Direct protein sequencing</keyword>
<keyword id="KW-0339">Growth factor</keyword>
<keyword id="KW-0597">Phosphoprotein</keyword>
<keyword id="KW-1185">Reference proteome</keyword>
<sequence length="142" mass="16736">MSESLVVCDVAEDLVEKLRKFRFRKETHNAAIIMKIDKDKRLVVLDEELEGVSPDELKDELPERQPRFIVYSYKYQHDDGRVSYPLCFIFSSPLGCKPEQQMMYAGSKNKLVQTAELTKVFEIRNTEDLTEEWLREKLGFFH</sequence>
<organism>
    <name type="scientific">Rattus norvegicus</name>
    <name type="common">Rat</name>
    <dbReference type="NCBI Taxonomy" id="10116"/>
    <lineage>
        <taxon>Eukaryota</taxon>
        <taxon>Metazoa</taxon>
        <taxon>Chordata</taxon>
        <taxon>Craniata</taxon>
        <taxon>Vertebrata</taxon>
        <taxon>Euteleostomi</taxon>
        <taxon>Mammalia</taxon>
        <taxon>Eutheria</taxon>
        <taxon>Euarchontoglires</taxon>
        <taxon>Glires</taxon>
        <taxon>Rodentia</taxon>
        <taxon>Myomorpha</taxon>
        <taxon>Muroidea</taxon>
        <taxon>Muridae</taxon>
        <taxon>Murinae</taxon>
        <taxon>Rattus</taxon>
    </lineage>
</organism>
<evidence type="ECO:0000250" key="1"/>
<evidence type="ECO:0000255" key="2">
    <source>
        <dbReference type="PROSITE-ProRule" id="PRU00599"/>
    </source>
</evidence>
<evidence type="ECO:0000269" key="3">
    <source ref="4"/>
</evidence>
<evidence type="ECO:0000305" key="4"/>
<dbReference type="EMBL" id="Z11558">
    <property type="protein sequence ID" value="CAA77650.1"/>
    <property type="molecule type" value="mRNA"/>
</dbReference>
<dbReference type="EMBL" id="BC081778">
    <property type="protein sequence ID" value="AAH81778.1"/>
    <property type="molecule type" value="mRNA"/>
</dbReference>
<dbReference type="PIR" id="S22149">
    <property type="entry name" value="S22149"/>
</dbReference>
<dbReference type="RefSeq" id="NP_112294.1">
    <property type="nucleotide sequence ID" value="NM_031032.2"/>
</dbReference>
<dbReference type="SMR" id="Q63228"/>
<dbReference type="BioGRID" id="249561">
    <property type="interactions" value="3"/>
</dbReference>
<dbReference type="FunCoup" id="Q63228">
    <property type="interactions" value="1787"/>
</dbReference>
<dbReference type="IntAct" id="Q63228">
    <property type="interactions" value="1"/>
</dbReference>
<dbReference type="MINT" id="Q63228"/>
<dbReference type="STRING" id="10116.ENSRNOP00000067695"/>
<dbReference type="iPTMnet" id="Q63228"/>
<dbReference type="PhosphoSitePlus" id="Q63228"/>
<dbReference type="SwissPalm" id="Q63228"/>
<dbReference type="jPOST" id="Q63228"/>
<dbReference type="PaxDb" id="10116-ENSRNOP00000067695"/>
<dbReference type="Ensembl" id="ENSRNOT00000101993.1">
    <property type="protein sequence ID" value="ENSRNOP00000089942.1"/>
    <property type="gene ID" value="ENSRNOG00000064480.1"/>
</dbReference>
<dbReference type="GeneID" id="81661"/>
<dbReference type="KEGG" id="rno:81661"/>
<dbReference type="UCSC" id="RGD:70910">
    <property type="organism name" value="rat"/>
</dbReference>
<dbReference type="AGR" id="RGD:70910"/>
<dbReference type="CTD" id="2764"/>
<dbReference type="RGD" id="70910">
    <property type="gene designation" value="Gmfb"/>
</dbReference>
<dbReference type="eggNOG" id="KOG1736">
    <property type="taxonomic scope" value="Eukaryota"/>
</dbReference>
<dbReference type="GeneTree" id="ENSGT00390000008920"/>
<dbReference type="InParanoid" id="Q63228"/>
<dbReference type="OMA" id="EWKMLYA"/>
<dbReference type="OrthoDB" id="3919494at2759"/>
<dbReference type="PRO" id="PR:Q63228"/>
<dbReference type="Proteomes" id="UP000002494">
    <property type="component" value="Chromosome 15"/>
</dbReference>
<dbReference type="GO" id="GO:0030864">
    <property type="term" value="C:cortical actin cytoskeleton"/>
    <property type="evidence" value="ECO:0000318"/>
    <property type="project" value="GO_Central"/>
</dbReference>
<dbReference type="GO" id="GO:0003779">
    <property type="term" value="F:actin binding"/>
    <property type="evidence" value="ECO:0007669"/>
    <property type="project" value="InterPro"/>
</dbReference>
<dbReference type="GO" id="GO:0071933">
    <property type="term" value="F:Arp2/3 complex binding"/>
    <property type="evidence" value="ECO:0000318"/>
    <property type="project" value="GO_Central"/>
</dbReference>
<dbReference type="GO" id="GO:0008083">
    <property type="term" value="F:growth factor activity"/>
    <property type="evidence" value="ECO:0007669"/>
    <property type="project" value="UniProtKB-KW"/>
</dbReference>
<dbReference type="GO" id="GO:0071846">
    <property type="term" value="P:actin filament debranching"/>
    <property type="evidence" value="ECO:0000318"/>
    <property type="project" value="GO_Central"/>
</dbReference>
<dbReference type="GO" id="GO:0007612">
    <property type="term" value="P:learning"/>
    <property type="evidence" value="ECO:0000266"/>
    <property type="project" value="RGD"/>
</dbReference>
<dbReference type="GO" id="GO:0007626">
    <property type="term" value="P:locomotory behavior"/>
    <property type="evidence" value="ECO:0000266"/>
    <property type="project" value="RGD"/>
</dbReference>
<dbReference type="GO" id="GO:0034316">
    <property type="term" value="P:negative regulation of Arp2/3 complex-mediated actin nucleation"/>
    <property type="evidence" value="ECO:0000318"/>
    <property type="project" value="GO_Central"/>
</dbReference>
<dbReference type="CDD" id="cd11283">
    <property type="entry name" value="ADF_GMF-beta_like"/>
    <property type="match status" value="1"/>
</dbReference>
<dbReference type="FunFam" id="3.40.20.10:FF:000024">
    <property type="entry name" value="Glia maturation factor"/>
    <property type="match status" value="1"/>
</dbReference>
<dbReference type="Gene3D" id="3.40.20.10">
    <property type="entry name" value="Severin"/>
    <property type="match status" value="1"/>
</dbReference>
<dbReference type="InterPro" id="IPR002108">
    <property type="entry name" value="ADF-H"/>
</dbReference>
<dbReference type="InterPro" id="IPR029006">
    <property type="entry name" value="ADF-H/Gelsolin-like_dom_sf"/>
</dbReference>
<dbReference type="InterPro" id="IPR011171">
    <property type="entry name" value="GMF"/>
</dbReference>
<dbReference type="PANTHER" id="PTHR11249:SF3">
    <property type="entry name" value="GLIA MATURATION FACTOR BETA"/>
    <property type="match status" value="1"/>
</dbReference>
<dbReference type="PANTHER" id="PTHR11249">
    <property type="entry name" value="GLIAL FACTOR NATURATION FACTOR"/>
    <property type="match status" value="1"/>
</dbReference>
<dbReference type="Pfam" id="PF00241">
    <property type="entry name" value="Cofilin_ADF"/>
    <property type="match status" value="1"/>
</dbReference>
<dbReference type="PIRSF" id="PIRSF001788">
    <property type="entry name" value="GMF-beta"/>
    <property type="match status" value="1"/>
</dbReference>
<dbReference type="SMART" id="SM00102">
    <property type="entry name" value="ADF"/>
    <property type="match status" value="1"/>
</dbReference>
<dbReference type="SUPFAM" id="SSF55753">
    <property type="entry name" value="Actin depolymerizing proteins"/>
    <property type="match status" value="1"/>
</dbReference>
<dbReference type="PROSITE" id="PS51263">
    <property type="entry name" value="ADF_H"/>
    <property type="match status" value="1"/>
</dbReference>
<accession>Q63228</accession>
<reference key="1">
    <citation type="journal article" date="1993" name="J. Neurochem.">
        <title>Expression of glia maturation factor beta mRNA and protein in rat organs and cells.</title>
        <authorList>
            <person name="Zaheer A."/>
            <person name="Fink B.D."/>
            <person name="Lim R."/>
        </authorList>
    </citation>
    <scope>NUCLEOTIDE SEQUENCE [MRNA]</scope>
</reference>
<reference key="2">
    <citation type="journal article" date="2004" name="Genome Res.">
        <title>The status, quality, and expansion of the NIH full-length cDNA project: the Mammalian Gene Collection (MGC).</title>
        <authorList>
            <consortium name="The MGC Project Team"/>
        </authorList>
    </citation>
    <scope>NUCLEOTIDE SEQUENCE [LARGE SCALE MRNA]</scope>
    <source>
        <tissue>Heart</tissue>
    </source>
</reference>
<reference key="3">
    <citation type="submission" date="2007-04" db="UniProtKB">
        <authorList>
            <person name="Lubec G."/>
            <person name="Diao W."/>
        </authorList>
    </citation>
    <scope>PROTEIN SEQUENCE OF 42-64</scope>
    <scope>IDENTIFICATION BY MASS SPECTROMETRY</scope>
    <source>
        <strain>Sprague-Dawley</strain>
        <tissue>Hippocampus</tissue>
    </source>
</reference>
<reference key="4">
    <citation type="submission" date="2007-02" db="UniProtKB">
        <authorList>
            <person name="Lubec G."/>
            <person name="Chen W.-Q."/>
        </authorList>
    </citation>
    <scope>ACETYLATION AT SER-2</scope>
    <scope>IDENTIFICATION BY MASS SPECTROMETRY</scope>
</reference>
<comment type="function">
    <text evidence="1">This protein causes differentiation of brain cells, stimulation of neural regeneration, and inhibition of proliferation of tumor cells.</text>
</comment>
<comment type="PTM">
    <text evidence="1">Phosphorylated; stimulated by phorbol ester.</text>
</comment>
<comment type="similarity">
    <text evidence="4">Belongs to the actin-binding proteins ADF family. GMF subfamily.</text>
</comment>
<feature type="initiator methionine" description="Removed" evidence="3">
    <location>
        <position position="1"/>
    </location>
</feature>
<feature type="chain" id="PRO_0000214946" description="Glia maturation factor beta">
    <location>
        <begin position="2"/>
        <end position="142"/>
    </location>
</feature>
<feature type="domain" description="ADF-H" evidence="2">
    <location>
        <begin position="4"/>
        <end position="139"/>
    </location>
</feature>
<feature type="modified residue" description="N-acetylserine" evidence="3">
    <location>
        <position position="2"/>
    </location>
</feature>
<name>GMFB_RAT</name>
<gene>
    <name type="primary">Gmfb</name>
</gene>
<proteinExistence type="evidence at protein level"/>
<protein>
    <recommendedName>
        <fullName>Glia maturation factor beta</fullName>
        <shortName>GMF-beta</shortName>
    </recommendedName>
</protein>